<proteinExistence type="inferred from homology"/>
<accession>Q9S4U0</accession>
<reference key="1">
    <citation type="journal article" date="1999" name="J. Bacteriol.">
        <title>Influence of a putative ECF sigma factor on expression of the major outer membrane protein, OprF, in Pseudomonas aeruginosa and Pseudomonas fluorescens.</title>
        <authorList>
            <person name="Brinkman F.S."/>
            <person name="Schoofs G."/>
            <person name="Hancock R.E."/>
            <person name="De Mot R."/>
        </authorList>
    </citation>
    <scope>NUCLEOTIDE SEQUENCE [GENOMIC DNA]</scope>
    <source>
        <strain>OE 28.3</strain>
    </source>
</reference>
<dbReference type="EC" id="4.1.3.17"/>
<dbReference type="EC" id="4.1.1.112"/>
<dbReference type="EMBL" id="AF115334">
    <property type="protein sequence ID" value="AAD45979.1"/>
    <property type="molecule type" value="Genomic_DNA"/>
</dbReference>
<dbReference type="SMR" id="Q9S4U0"/>
<dbReference type="eggNOG" id="COG0684">
    <property type="taxonomic scope" value="Bacteria"/>
</dbReference>
<dbReference type="GO" id="GO:0047443">
    <property type="term" value="F:4-hydroxy-4-methyl-2-oxoglutarate aldolase activity"/>
    <property type="evidence" value="ECO:0007669"/>
    <property type="project" value="UniProtKB-EC"/>
</dbReference>
<dbReference type="GO" id="GO:0046872">
    <property type="term" value="F:metal ion binding"/>
    <property type="evidence" value="ECO:0007669"/>
    <property type="project" value="UniProtKB-KW"/>
</dbReference>
<dbReference type="GO" id="GO:0008948">
    <property type="term" value="F:oxaloacetate decarboxylase activity"/>
    <property type="evidence" value="ECO:0007669"/>
    <property type="project" value="UniProtKB-EC"/>
</dbReference>
<dbReference type="GO" id="GO:0008428">
    <property type="term" value="F:ribonuclease inhibitor activity"/>
    <property type="evidence" value="ECO:0007669"/>
    <property type="project" value="InterPro"/>
</dbReference>
<dbReference type="GO" id="GO:0051252">
    <property type="term" value="P:regulation of RNA metabolic process"/>
    <property type="evidence" value="ECO:0007669"/>
    <property type="project" value="InterPro"/>
</dbReference>
<dbReference type="CDD" id="cd16841">
    <property type="entry name" value="RraA_family"/>
    <property type="match status" value="1"/>
</dbReference>
<dbReference type="Gene3D" id="3.50.30.40">
    <property type="entry name" value="Ribonuclease E inhibitor RraA/RraA-like"/>
    <property type="match status" value="1"/>
</dbReference>
<dbReference type="InterPro" id="IPR010203">
    <property type="entry name" value="RraA"/>
</dbReference>
<dbReference type="InterPro" id="IPR005493">
    <property type="entry name" value="RraA/RraA-like"/>
</dbReference>
<dbReference type="InterPro" id="IPR036704">
    <property type="entry name" value="RraA/RraA-like_sf"/>
</dbReference>
<dbReference type="NCBIfam" id="TIGR01935">
    <property type="entry name" value="NOT-MenG"/>
    <property type="match status" value="1"/>
</dbReference>
<dbReference type="NCBIfam" id="NF006875">
    <property type="entry name" value="PRK09372.1"/>
    <property type="match status" value="1"/>
</dbReference>
<dbReference type="NCBIfam" id="NF009134">
    <property type="entry name" value="PRK12487.1"/>
    <property type="match status" value="1"/>
</dbReference>
<dbReference type="PANTHER" id="PTHR33254">
    <property type="entry name" value="4-HYDROXY-4-METHYL-2-OXOGLUTARATE ALDOLASE 3-RELATED"/>
    <property type="match status" value="1"/>
</dbReference>
<dbReference type="PANTHER" id="PTHR33254:SF29">
    <property type="entry name" value="REGULATOR OF RIBONUCLEASE ACTIVITY A"/>
    <property type="match status" value="1"/>
</dbReference>
<dbReference type="Pfam" id="PF03737">
    <property type="entry name" value="RraA-like"/>
    <property type="match status" value="1"/>
</dbReference>
<dbReference type="SUPFAM" id="SSF89562">
    <property type="entry name" value="RraA-like"/>
    <property type="match status" value="1"/>
</dbReference>
<keyword id="KW-0456">Lyase</keyword>
<keyword id="KW-0479">Metal-binding</keyword>
<comment type="function">
    <text evidence="1">Catalyzes the aldol cleavage of 4-hydroxy-4-methyl-2-oxoglutarate (HMG) into 2 molecules of pyruvate. Also contains a secondary oxaloacetate (OAA) decarboxylase activity due to the common pyruvate enolate transition state formed following C-C bond cleavage in the retro-aldol and decarboxylation reactions (By similarity).</text>
</comment>
<comment type="catalytic activity">
    <reaction>
        <text>4-hydroxy-4-methyl-2-oxoglutarate = 2 pyruvate</text>
        <dbReference type="Rhea" id="RHEA:22748"/>
        <dbReference type="ChEBI" id="CHEBI:15361"/>
        <dbReference type="ChEBI" id="CHEBI:58276"/>
        <dbReference type="EC" id="4.1.3.17"/>
    </reaction>
</comment>
<comment type="catalytic activity">
    <reaction>
        <text>oxaloacetate + H(+) = pyruvate + CO2</text>
        <dbReference type="Rhea" id="RHEA:15641"/>
        <dbReference type="ChEBI" id="CHEBI:15361"/>
        <dbReference type="ChEBI" id="CHEBI:15378"/>
        <dbReference type="ChEBI" id="CHEBI:16452"/>
        <dbReference type="ChEBI" id="CHEBI:16526"/>
        <dbReference type="EC" id="4.1.1.112"/>
    </reaction>
</comment>
<comment type="cofactor">
    <cofactor evidence="1">
        <name>a divalent metal cation</name>
        <dbReference type="ChEBI" id="CHEBI:60240"/>
    </cofactor>
    <text evidence="1">Divalent metal cation.</text>
</comment>
<comment type="subunit">
    <text evidence="1">Homotrimer.</text>
</comment>
<comment type="similarity">
    <text evidence="2">Belongs to the class II aldolase/RraA-like family.</text>
</comment>
<organism>
    <name type="scientific">Pseudomonas fluorescens</name>
    <dbReference type="NCBI Taxonomy" id="294"/>
    <lineage>
        <taxon>Bacteria</taxon>
        <taxon>Pseudomonadati</taxon>
        <taxon>Pseudomonadota</taxon>
        <taxon>Gammaproteobacteria</taxon>
        <taxon>Pseudomonadales</taxon>
        <taxon>Pseudomonadaceae</taxon>
        <taxon>Pseudomonas</taxon>
    </lineage>
</organism>
<feature type="chain" id="PRO_0000209630" description="Putative 4-hydroxy-4-methyl-2-oxoglutarate aldolase">
    <location>
        <begin position="1"/>
        <end position="163"/>
    </location>
</feature>
<feature type="binding site" evidence="1">
    <location>
        <begin position="76"/>
        <end position="79"/>
    </location>
    <ligand>
        <name>substrate</name>
    </ligand>
</feature>
<feature type="binding site" evidence="1">
    <location>
        <position position="98"/>
    </location>
    <ligand>
        <name>substrate</name>
    </ligand>
</feature>
<feature type="binding site" evidence="1">
    <location>
        <position position="99"/>
    </location>
    <ligand>
        <name>a divalent metal cation</name>
        <dbReference type="ChEBI" id="CHEBI:60240"/>
    </ligand>
</feature>
<sequence length="163" mass="17501">MIHYVTPDLCDAYPELVQVVEPMFSNFGGRDSFGGEIVTIKCFEDNSLVKEQADQPGAGKVLVVDGGGSLRRALLGDMIAEKAAKNGWEGLVIYGCVRDVDVLAQTDLGVQALAPHPMKTDKRGIGDLNVVVTFASVTFRPGEYVYADNNGVIVSPSPLKMPE</sequence>
<protein>
    <recommendedName>
        <fullName>Putative 4-hydroxy-4-methyl-2-oxoglutarate aldolase</fullName>
        <shortName>HMG aldolase</shortName>
        <ecNumber>4.1.3.17</ecNumber>
    </recommendedName>
    <alternativeName>
        <fullName>Oxaloacetate decarboxylase</fullName>
        <shortName>OAA decarboxylase</shortName>
        <ecNumber>4.1.1.112</ecNumber>
    </alternativeName>
    <alternativeName>
        <fullName>Regulator of ribonuclease activity homolog</fullName>
    </alternativeName>
    <alternativeName>
        <fullName>RraA-like protein</fullName>
    </alternativeName>
</protein>
<name>RRAAH_PSEFL</name>
<evidence type="ECO:0000250" key="1"/>
<evidence type="ECO:0000305" key="2"/>